<feature type="chain" id="PRO_0000185059" description="5-oxoprolinase subunit A">
    <location>
        <begin position="1"/>
        <end position="251"/>
    </location>
</feature>
<evidence type="ECO:0000255" key="1">
    <source>
        <dbReference type="HAMAP-Rule" id="MF_00691"/>
    </source>
</evidence>
<reference key="1">
    <citation type="journal article" date="2003" name="Lancet">
        <title>Genome sequence of Vibrio parahaemolyticus: a pathogenic mechanism distinct from that of V. cholerae.</title>
        <authorList>
            <person name="Makino K."/>
            <person name="Oshima K."/>
            <person name="Kurokawa K."/>
            <person name="Yokoyama K."/>
            <person name="Uda T."/>
            <person name="Tagomori K."/>
            <person name="Iijima Y."/>
            <person name="Najima M."/>
            <person name="Nakano M."/>
            <person name="Yamashita A."/>
            <person name="Kubota Y."/>
            <person name="Kimura S."/>
            <person name="Yasunaga T."/>
            <person name="Honda T."/>
            <person name="Shinagawa H."/>
            <person name="Hattori M."/>
            <person name="Iida T."/>
        </authorList>
    </citation>
    <scope>NUCLEOTIDE SEQUENCE [LARGE SCALE GENOMIC DNA]</scope>
    <source>
        <strain>RIMD 2210633</strain>
    </source>
</reference>
<keyword id="KW-0067">ATP-binding</keyword>
<keyword id="KW-0378">Hydrolase</keyword>
<keyword id="KW-0547">Nucleotide-binding</keyword>
<protein>
    <recommendedName>
        <fullName evidence="1">5-oxoprolinase subunit A</fullName>
        <shortName evidence="1">5-OPase subunit A</shortName>
        <ecNumber evidence="1">3.5.2.9</ecNumber>
    </recommendedName>
    <alternativeName>
        <fullName evidence="1">5-oxoprolinase (ATP-hydrolyzing) subunit A</fullName>
    </alternativeName>
</protein>
<dbReference type="EC" id="3.5.2.9" evidence="1"/>
<dbReference type="EMBL" id="BA000032">
    <property type="protein sequence ID" value="BAC62220.1"/>
    <property type="molecule type" value="Genomic_DNA"/>
</dbReference>
<dbReference type="RefSeq" id="NP_800387.1">
    <property type="nucleotide sequence ID" value="NC_004605.1"/>
</dbReference>
<dbReference type="RefSeq" id="WP_005455327.1">
    <property type="nucleotide sequence ID" value="NC_004605.1"/>
</dbReference>
<dbReference type="SMR" id="Q87HS9"/>
<dbReference type="GeneID" id="1191566"/>
<dbReference type="KEGG" id="vpa:VPA0877"/>
<dbReference type="PATRIC" id="fig|223926.6.peg.3811"/>
<dbReference type="eggNOG" id="COG1540">
    <property type="taxonomic scope" value="Bacteria"/>
</dbReference>
<dbReference type="HOGENOM" id="CLU_069535_0_0_6"/>
<dbReference type="Proteomes" id="UP000002493">
    <property type="component" value="Chromosome 2"/>
</dbReference>
<dbReference type="GO" id="GO:0017168">
    <property type="term" value="F:5-oxoprolinase (ATP-hydrolyzing) activity"/>
    <property type="evidence" value="ECO:0007669"/>
    <property type="project" value="UniProtKB-UniRule"/>
</dbReference>
<dbReference type="GO" id="GO:0005524">
    <property type="term" value="F:ATP binding"/>
    <property type="evidence" value="ECO:0007669"/>
    <property type="project" value="UniProtKB-UniRule"/>
</dbReference>
<dbReference type="GO" id="GO:0005975">
    <property type="term" value="P:carbohydrate metabolic process"/>
    <property type="evidence" value="ECO:0007669"/>
    <property type="project" value="InterPro"/>
</dbReference>
<dbReference type="CDD" id="cd10787">
    <property type="entry name" value="LamB_YcsF_like"/>
    <property type="match status" value="1"/>
</dbReference>
<dbReference type="Gene3D" id="3.20.20.370">
    <property type="entry name" value="Glycoside hydrolase/deacetylase"/>
    <property type="match status" value="1"/>
</dbReference>
<dbReference type="HAMAP" id="MF_00691">
    <property type="entry name" value="PxpA"/>
    <property type="match status" value="1"/>
</dbReference>
<dbReference type="InterPro" id="IPR011330">
    <property type="entry name" value="Glyco_hydro/deAcase_b/a-brl"/>
</dbReference>
<dbReference type="InterPro" id="IPR005501">
    <property type="entry name" value="LamB/YcsF/PxpA-like"/>
</dbReference>
<dbReference type="NCBIfam" id="NF003814">
    <property type="entry name" value="PRK05406.1-3"/>
    <property type="match status" value="1"/>
</dbReference>
<dbReference type="NCBIfam" id="NF003816">
    <property type="entry name" value="PRK05406.1-5"/>
    <property type="match status" value="1"/>
</dbReference>
<dbReference type="PANTHER" id="PTHR30292:SF0">
    <property type="entry name" value="5-OXOPROLINASE SUBUNIT A"/>
    <property type="match status" value="1"/>
</dbReference>
<dbReference type="PANTHER" id="PTHR30292">
    <property type="entry name" value="UNCHARACTERIZED PROTEIN YBGL-RELATED"/>
    <property type="match status" value="1"/>
</dbReference>
<dbReference type="Pfam" id="PF03746">
    <property type="entry name" value="LamB_YcsF"/>
    <property type="match status" value="1"/>
</dbReference>
<dbReference type="SUPFAM" id="SSF88713">
    <property type="entry name" value="Glycoside hydrolase/deacetylase"/>
    <property type="match status" value="1"/>
</dbReference>
<gene>
    <name evidence="1" type="primary">pxpA</name>
    <name type="ordered locus">VPA0877</name>
</gene>
<sequence length="251" mass="27677">MTLNKQQLTLNCDMGESFGSWKMGADDSVMPHVDMANIACGFHASDPNVMHDTITLANLHDVDIGAHPGYPDLQGFGRRSLSMSSDEITNMVIYQVGALQALCRAQYTDIGYIKPHGALYNDMMKSDAVFRAVVKAAALFKVPLMILASQENEKYLEIADDYDVPLLFEAFADRLYQDDGMLTPRRHPNAVLKDELAILEQVRTLADSGRVKTASGSYILLEADTICVHGDNEESIALIQKIRQSLYSGGN</sequence>
<name>PXPA_VIBPA</name>
<proteinExistence type="inferred from homology"/>
<comment type="function">
    <text evidence="1">Catalyzes the cleavage of 5-oxoproline to form L-glutamate coupled to the hydrolysis of ATP to ADP and inorganic phosphate.</text>
</comment>
<comment type="catalytic activity">
    <reaction evidence="1">
        <text>5-oxo-L-proline + ATP + 2 H2O = L-glutamate + ADP + phosphate + H(+)</text>
        <dbReference type="Rhea" id="RHEA:10348"/>
        <dbReference type="ChEBI" id="CHEBI:15377"/>
        <dbReference type="ChEBI" id="CHEBI:15378"/>
        <dbReference type="ChEBI" id="CHEBI:29985"/>
        <dbReference type="ChEBI" id="CHEBI:30616"/>
        <dbReference type="ChEBI" id="CHEBI:43474"/>
        <dbReference type="ChEBI" id="CHEBI:58402"/>
        <dbReference type="ChEBI" id="CHEBI:456216"/>
        <dbReference type="EC" id="3.5.2.9"/>
    </reaction>
</comment>
<comment type="subunit">
    <text evidence="1">Forms a complex composed of PxpA, PxpB and PxpC.</text>
</comment>
<comment type="similarity">
    <text evidence="1">Belongs to the LamB/PxpA family.</text>
</comment>
<accession>Q87HS9</accession>
<organism>
    <name type="scientific">Vibrio parahaemolyticus serotype O3:K6 (strain RIMD 2210633)</name>
    <dbReference type="NCBI Taxonomy" id="223926"/>
    <lineage>
        <taxon>Bacteria</taxon>
        <taxon>Pseudomonadati</taxon>
        <taxon>Pseudomonadota</taxon>
        <taxon>Gammaproteobacteria</taxon>
        <taxon>Vibrionales</taxon>
        <taxon>Vibrionaceae</taxon>
        <taxon>Vibrio</taxon>
    </lineage>
</organism>